<evidence type="ECO:0000255" key="1">
    <source>
        <dbReference type="HAMAP-Rule" id="MF_01553"/>
    </source>
</evidence>
<accession>B7JKV0</accession>
<organism>
    <name type="scientific">Bacillus cereus (strain AH820)</name>
    <dbReference type="NCBI Taxonomy" id="405535"/>
    <lineage>
        <taxon>Bacteria</taxon>
        <taxon>Bacillati</taxon>
        <taxon>Bacillota</taxon>
        <taxon>Bacilli</taxon>
        <taxon>Bacillales</taxon>
        <taxon>Bacillaceae</taxon>
        <taxon>Bacillus</taxon>
        <taxon>Bacillus cereus group</taxon>
    </lineage>
</organism>
<feature type="chain" id="PRO_1000199614" description="DNA-directed RNA polymerase subunit epsilon">
    <location>
        <begin position="1"/>
        <end position="70"/>
    </location>
</feature>
<sequence length="70" mass="8189">MIFKVFYQEKMTEVPVRENTKVLYLEATSEKDVRTKLNKFAYNIEFVQSVTGNHLEYEKANADLTLAEIV</sequence>
<gene>
    <name evidence="1" type="primary">rpoY</name>
    <name type="ordered locus">BCAH820_3991</name>
</gene>
<proteinExistence type="inferred from homology"/>
<name>RPOY_BACC0</name>
<dbReference type="EC" id="2.7.7.6" evidence="1"/>
<dbReference type="EMBL" id="CP001283">
    <property type="protein sequence ID" value="ACK88752.1"/>
    <property type="molecule type" value="Genomic_DNA"/>
</dbReference>
<dbReference type="RefSeq" id="WP_000576443.1">
    <property type="nucleotide sequence ID" value="NC_011773.1"/>
</dbReference>
<dbReference type="SMR" id="B7JKV0"/>
<dbReference type="KEGG" id="bcu:BCAH820_3991"/>
<dbReference type="HOGENOM" id="CLU_187518_0_0_9"/>
<dbReference type="Proteomes" id="UP000001363">
    <property type="component" value="Chromosome"/>
</dbReference>
<dbReference type="GO" id="GO:0000428">
    <property type="term" value="C:DNA-directed RNA polymerase complex"/>
    <property type="evidence" value="ECO:0007669"/>
    <property type="project" value="UniProtKB-KW"/>
</dbReference>
<dbReference type="GO" id="GO:0003677">
    <property type="term" value="F:DNA binding"/>
    <property type="evidence" value="ECO:0007669"/>
    <property type="project" value="UniProtKB-UniRule"/>
</dbReference>
<dbReference type="GO" id="GO:0003899">
    <property type="term" value="F:DNA-directed RNA polymerase activity"/>
    <property type="evidence" value="ECO:0007669"/>
    <property type="project" value="UniProtKB-UniRule"/>
</dbReference>
<dbReference type="GO" id="GO:0006351">
    <property type="term" value="P:DNA-templated transcription"/>
    <property type="evidence" value="ECO:0007669"/>
    <property type="project" value="UniProtKB-UniRule"/>
</dbReference>
<dbReference type="Gene3D" id="3.10.20.730">
    <property type="entry name" value="RNAP, epsilon subunit-like"/>
    <property type="match status" value="1"/>
</dbReference>
<dbReference type="HAMAP" id="MF_01553">
    <property type="entry name" value="RNApol_bact_RpoY"/>
    <property type="match status" value="1"/>
</dbReference>
<dbReference type="InterPro" id="IPR009907">
    <property type="entry name" value="RpoY"/>
</dbReference>
<dbReference type="NCBIfam" id="NF010188">
    <property type="entry name" value="PRK13667.1"/>
    <property type="match status" value="1"/>
</dbReference>
<dbReference type="Pfam" id="PF07288">
    <property type="entry name" value="RpoY"/>
    <property type="match status" value="1"/>
</dbReference>
<keyword id="KW-0240">DNA-directed RNA polymerase</keyword>
<keyword id="KW-0548">Nucleotidyltransferase</keyword>
<keyword id="KW-0804">Transcription</keyword>
<keyword id="KW-0808">Transferase</keyword>
<protein>
    <recommendedName>
        <fullName evidence="1">DNA-directed RNA polymerase subunit epsilon</fullName>
        <shortName evidence="1">RNAP epsilon subunit</shortName>
        <ecNumber evidence="1">2.7.7.6</ecNumber>
    </recommendedName>
    <alternativeName>
        <fullName evidence="1">RNA polymerase epsilon subunit</fullName>
    </alternativeName>
    <alternativeName>
        <fullName evidence="1">Transcriptase subunit epsilon</fullName>
    </alternativeName>
</protein>
<reference key="1">
    <citation type="submission" date="2008-10" db="EMBL/GenBank/DDBJ databases">
        <title>Genome sequence of Bacillus cereus AH820.</title>
        <authorList>
            <person name="Dodson R.J."/>
            <person name="Durkin A.S."/>
            <person name="Rosovitz M.J."/>
            <person name="Rasko D.A."/>
            <person name="Hoffmaster A."/>
            <person name="Ravel J."/>
            <person name="Sutton G."/>
        </authorList>
    </citation>
    <scope>NUCLEOTIDE SEQUENCE [LARGE SCALE GENOMIC DNA]</scope>
    <source>
        <strain>AH820</strain>
    </source>
</reference>
<comment type="function">
    <text evidence="1">A non-essential component of RNA polymerase (RNAP).</text>
</comment>
<comment type="catalytic activity">
    <reaction evidence="1">
        <text>RNA(n) + a ribonucleoside 5'-triphosphate = RNA(n+1) + diphosphate</text>
        <dbReference type="Rhea" id="RHEA:21248"/>
        <dbReference type="Rhea" id="RHEA-COMP:14527"/>
        <dbReference type="Rhea" id="RHEA-COMP:17342"/>
        <dbReference type="ChEBI" id="CHEBI:33019"/>
        <dbReference type="ChEBI" id="CHEBI:61557"/>
        <dbReference type="ChEBI" id="CHEBI:140395"/>
        <dbReference type="EC" id="2.7.7.6"/>
    </reaction>
</comment>
<comment type="subunit">
    <text evidence="1">RNAP is composed of a core of 2 alpha, a beta and a beta' subunit. The core is associated with a delta subunit, and at least one of epsilon or omega. When a sigma factor is associated with the core the holoenzyme is formed, which can initiate transcription.</text>
</comment>
<comment type="similarity">
    <text evidence="1">Belongs to the RNA polymerase subunit epsilon family.</text>
</comment>